<organism>
    <name type="scientific">Moorella thermoacetica (strain ATCC 39073 / JCM 9320)</name>
    <dbReference type="NCBI Taxonomy" id="264732"/>
    <lineage>
        <taxon>Bacteria</taxon>
        <taxon>Bacillati</taxon>
        <taxon>Bacillota</taxon>
        <taxon>Clostridia</taxon>
        <taxon>Moorellales</taxon>
        <taxon>Moorellaceae</taxon>
        <taxon>Moorella</taxon>
    </lineage>
</organism>
<sequence length="246" mass="27409">MPCLKITLAYDGSNYAGWQVQPEAHGPTVQGEVAAALKRLTGEEITPVAAGRTDAGVHARGQVISFSTRARIPVERWPLALNSVLPADIAALEAVEVAPDFHARYCAKRKWYRYTIYNNRVPDVFCRRYSWHLRQPLDVIAMARAAAYLQGCHDFRSFCAAGSPVRHFERQVQQASVSQNGPFIYFDVIADGFLYHMVRIMVGTLVEIGRRRLVPEAIPAILAARSREKAGPTAPARGLCLERVEY</sequence>
<comment type="function">
    <text evidence="1">Formation of pseudouridine at positions 38, 39 and 40 in the anticodon stem and loop of transfer RNAs.</text>
</comment>
<comment type="catalytic activity">
    <reaction evidence="1">
        <text>uridine(38/39/40) in tRNA = pseudouridine(38/39/40) in tRNA</text>
        <dbReference type="Rhea" id="RHEA:22376"/>
        <dbReference type="Rhea" id="RHEA-COMP:10085"/>
        <dbReference type="Rhea" id="RHEA-COMP:10087"/>
        <dbReference type="ChEBI" id="CHEBI:65314"/>
        <dbReference type="ChEBI" id="CHEBI:65315"/>
        <dbReference type="EC" id="5.4.99.12"/>
    </reaction>
</comment>
<comment type="subunit">
    <text evidence="1">Homodimer.</text>
</comment>
<comment type="similarity">
    <text evidence="1">Belongs to the tRNA pseudouridine synthase TruA family.</text>
</comment>
<keyword id="KW-0413">Isomerase</keyword>
<keyword id="KW-0819">tRNA processing</keyword>
<evidence type="ECO:0000255" key="1">
    <source>
        <dbReference type="HAMAP-Rule" id="MF_00171"/>
    </source>
</evidence>
<gene>
    <name evidence="1" type="primary">truA</name>
    <name type="ordered locus">Moth_2426</name>
</gene>
<dbReference type="EC" id="5.4.99.12" evidence="1"/>
<dbReference type="EMBL" id="CP000232">
    <property type="protein sequence ID" value="ABC20708.1"/>
    <property type="molecule type" value="Genomic_DNA"/>
</dbReference>
<dbReference type="RefSeq" id="YP_431251.1">
    <property type="nucleotide sequence ID" value="NC_007644.1"/>
</dbReference>
<dbReference type="SMR" id="Q2RFT1"/>
<dbReference type="STRING" id="264732.Moth_2426"/>
<dbReference type="EnsemblBacteria" id="ABC20708">
    <property type="protein sequence ID" value="ABC20708"/>
    <property type="gene ID" value="Moth_2426"/>
</dbReference>
<dbReference type="KEGG" id="mta:Moth_2426"/>
<dbReference type="PATRIC" id="fig|264732.11.peg.2644"/>
<dbReference type="eggNOG" id="COG0101">
    <property type="taxonomic scope" value="Bacteria"/>
</dbReference>
<dbReference type="HOGENOM" id="CLU_014673_0_1_9"/>
<dbReference type="OrthoDB" id="9811823at2"/>
<dbReference type="GO" id="GO:0003723">
    <property type="term" value="F:RNA binding"/>
    <property type="evidence" value="ECO:0007669"/>
    <property type="project" value="InterPro"/>
</dbReference>
<dbReference type="GO" id="GO:0160147">
    <property type="term" value="F:tRNA pseudouridine(38-40) synthase activity"/>
    <property type="evidence" value="ECO:0007669"/>
    <property type="project" value="UniProtKB-EC"/>
</dbReference>
<dbReference type="GO" id="GO:0031119">
    <property type="term" value="P:tRNA pseudouridine synthesis"/>
    <property type="evidence" value="ECO:0007669"/>
    <property type="project" value="UniProtKB-UniRule"/>
</dbReference>
<dbReference type="CDD" id="cd02570">
    <property type="entry name" value="PseudoU_synth_EcTruA"/>
    <property type="match status" value="1"/>
</dbReference>
<dbReference type="FunFam" id="3.30.70.580:FF:000001">
    <property type="entry name" value="tRNA pseudouridine synthase A"/>
    <property type="match status" value="1"/>
</dbReference>
<dbReference type="Gene3D" id="3.30.70.660">
    <property type="entry name" value="Pseudouridine synthase I, catalytic domain, C-terminal subdomain"/>
    <property type="match status" value="1"/>
</dbReference>
<dbReference type="Gene3D" id="3.30.70.580">
    <property type="entry name" value="Pseudouridine synthase I, catalytic domain, N-terminal subdomain"/>
    <property type="match status" value="1"/>
</dbReference>
<dbReference type="HAMAP" id="MF_00171">
    <property type="entry name" value="TruA"/>
    <property type="match status" value="1"/>
</dbReference>
<dbReference type="InterPro" id="IPR020103">
    <property type="entry name" value="PsdUridine_synth_cat_dom_sf"/>
</dbReference>
<dbReference type="InterPro" id="IPR001406">
    <property type="entry name" value="PsdUridine_synth_TruA"/>
</dbReference>
<dbReference type="InterPro" id="IPR020097">
    <property type="entry name" value="PsdUridine_synth_TruA_a/b_dom"/>
</dbReference>
<dbReference type="InterPro" id="IPR020095">
    <property type="entry name" value="PsdUridine_synth_TruA_C"/>
</dbReference>
<dbReference type="InterPro" id="IPR020094">
    <property type="entry name" value="TruA/RsuA/RluB/E/F_N"/>
</dbReference>
<dbReference type="NCBIfam" id="TIGR00071">
    <property type="entry name" value="hisT_truA"/>
    <property type="match status" value="1"/>
</dbReference>
<dbReference type="PANTHER" id="PTHR11142">
    <property type="entry name" value="PSEUDOURIDYLATE SYNTHASE"/>
    <property type="match status" value="1"/>
</dbReference>
<dbReference type="PANTHER" id="PTHR11142:SF0">
    <property type="entry name" value="TRNA PSEUDOURIDINE SYNTHASE-LIKE 1"/>
    <property type="match status" value="1"/>
</dbReference>
<dbReference type="Pfam" id="PF01416">
    <property type="entry name" value="PseudoU_synth_1"/>
    <property type="match status" value="2"/>
</dbReference>
<dbReference type="PIRSF" id="PIRSF001430">
    <property type="entry name" value="tRNA_psdUrid_synth"/>
    <property type="match status" value="1"/>
</dbReference>
<dbReference type="SUPFAM" id="SSF55120">
    <property type="entry name" value="Pseudouridine synthase"/>
    <property type="match status" value="1"/>
</dbReference>
<feature type="chain" id="PRO_1000017118" description="tRNA pseudouridine synthase A">
    <location>
        <begin position="1"/>
        <end position="246"/>
    </location>
</feature>
<feature type="active site" description="Nucleophile" evidence="1">
    <location>
        <position position="54"/>
    </location>
</feature>
<feature type="binding site" evidence="1">
    <location>
        <position position="112"/>
    </location>
    <ligand>
        <name>substrate</name>
    </ligand>
</feature>
<protein>
    <recommendedName>
        <fullName evidence="1">tRNA pseudouridine synthase A</fullName>
        <ecNumber evidence="1">5.4.99.12</ecNumber>
    </recommendedName>
    <alternativeName>
        <fullName evidence="1">tRNA pseudouridine(38-40) synthase</fullName>
    </alternativeName>
    <alternativeName>
        <fullName evidence="1">tRNA pseudouridylate synthase I</fullName>
    </alternativeName>
    <alternativeName>
        <fullName evidence="1">tRNA-uridine isomerase I</fullName>
    </alternativeName>
</protein>
<proteinExistence type="inferred from homology"/>
<accession>Q2RFT1</accession>
<name>TRUA_MOOTA</name>
<reference key="1">
    <citation type="journal article" date="2008" name="Environ. Microbiol.">
        <title>The complete genome sequence of Moorella thermoacetica (f. Clostridium thermoaceticum).</title>
        <authorList>
            <person name="Pierce E."/>
            <person name="Xie G."/>
            <person name="Barabote R.D."/>
            <person name="Saunders E."/>
            <person name="Han C.S."/>
            <person name="Detter J.C."/>
            <person name="Richardson P."/>
            <person name="Brettin T.S."/>
            <person name="Das A."/>
            <person name="Ljungdahl L.G."/>
            <person name="Ragsdale S.W."/>
        </authorList>
    </citation>
    <scope>NUCLEOTIDE SEQUENCE [LARGE SCALE GENOMIC DNA]</scope>
    <source>
        <strain>ATCC 39073 / JCM 9320</strain>
    </source>
</reference>